<comment type="catalytic activity">
    <reaction evidence="1">
        <text>(S)-4-hydroxy-2-oxopentanoate = acetaldehyde + pyruvate</text>
        <dbReference type="Rhea" id="RHEA:22624"/>
        <dbReference type="ChEBI" id="CHEBI:15343"/>
        <dbReference type="ChEBI" id="CHEBI:15361"/>
        <dbReference type="ChEBI" id="CHEBI:73143"/>
        <dbReference type="EC" id="4.1.3.39"/>
    </reaction>
</comment>
<comment type="similarity">
    <text evidence="1">Belongs to the 4-hydroxy-2-oxovalerate aldolase family.</text>
</comment>
<organism>
    <name type="scientific">Methylibium petroleiphilum (strain ATCC BAA-1232 / LMG 22953 / PM1)</name>
    <dbReference type="NCBI Taxonomy" id="420662"/>
    <lineage>
        <taxon>Bacteria</taxon>
        <taxon>Pseudomonadati</taxon>
        <taxon>Pseudomonadota</taxon>
        <taxon>Betaproteobacteria</taxon>
        <taxon>Burkholderiales</taxon>
        <taxon>Sphaerotilaceae</taxon>
        <taxon>Methylibium</taxon>
    </lineage>
</organism>
<dbReference type="EC" id="4.1.3.39" evidence="1"/>
<dbReference type="EMBL" id="CP000555">
    <property type="protein sequence ID" value="ABM96274.1"/>
    <property type="molecule type" value="Genomic_DNA"/>
</dbReference>
<dbReference type="RefSeq" id="WP_011830896.1">
    <property type="nucleotide sequence ID" value="NC_008825.1"/>
</dbReference>
<dbReference type="SMR" id="A2SL35"/>
<dbReference type="STRING" id="420662.Mpe_A3321"/>
<dbReference type="KEGG" id="mpt:Mpe_A3321"/>
<dbReference type="eggNOG" id="COG0119">
    <property type="taxonomic scope" value="Bacteria"/>
</dbReference>
<dbReference type="HOGENOM" id="CLU_049173_0_0_4"/>
<dbReference type="Proteomes" id="UP000000366">
    <property type="component" value="Chromosome"/>
</dbReference>
<dbReference type="GO" id="GO:0003852">
    <property type="term" value="F:2-isopropylmalate synthase activity"/>
    <property type="evidence" value="ECO:0007669"/>
    <property type="project" value="TreeGrafter"/>
</dbReference>
<dbReference type="GO" id="GO:0008701">
    <property type="term" value="F:4-hydroxy-2-oxovalerate aldolase activity"/>
    <property type="evidence" value="ECO:0007669"/>
    <property type="project" value="UniProtKB-UniRule"/>
</dbReference>
<dbReference type="GO" id="GO:0030145">
    <property type="term" value="F:manganese ion binding"/>
    <property type="evidence" value="ECO:0007669"/>
    <property type="project" value="UniProtKB-UniRule"/>
</dbReference>
<dbReference type="GO" id="GO:0009056">
    <property type="term" value="P:catabolic process"/>
    <property type="evidence" value="ECO:0007669"/>
    <property type="project" value="UniProtKB-KW"/>
</dbReference>
<dbReference type="GO" id="GO:0009098">
    <property type="term" value="P:L-leucine biosynthetic process"/>
    <property type="evidence" value="ECO:0007669"/>
    <property type="project" value="TreeGrafter"/>
</dbReference>
<dbReference type="CDD" id="cd07943">
    <property type="entry name" value="DRE_TIM_HOA"/>
    <property type="match status" value="1"/>
</dbReference>
<dbReference type="Gene3D" id="1.10.8.60">
    <property type="match status" value="1"/>
</dbReference>
<dbReference type="Gene3D" id="3.20.20.70">
    <property type="entry name" value="Aldolase class I"/>
    <property type="match status" value="1"/>
</dbReference>
<dbReference type="HAMAP" id="MF_01656">
    <property type="entry name" value="HOA"/>
    <property type="match status" value="1"/>
</dbReference>
<dbReference type="InterPro" id="IPR050073">
    <property type="entry name" value="2-IPM_HCS-like"/>
</dbReference>
<dbReference type="InterPro" id="IPR017629">
    <property type="entry name" value="4OH_2_O-val_aldolase"/>
</dbReference>
<dbReference type="InterPro" id="IPR013785">
    <property type="entry name" value="Aldolase_TIM"/>
</dbReference>
<dbReference type="InterPro" id="IPR012425">
    <property type="entry name" value="DmpG_comm"/>
</dbReference>
<dbReference type="InterPro" id="IPR035685">
    <property type="entry name" value="DRE_TIM_HOA"/>
</dbReference>
<dbReference type="InterPro" id="IPR000891">
    <property type="entry name" value="PYR_CT"/>
</dbReference>
<dbReference type="NCBIfam" id="TIGR03217">
    <property type="entry name" value="4OH_2_O_val_ald"/>
    <property type="match status" value="1"/>
</dbReference>
<dbReference type="NCBIfam" id="NF006049">
    <property type="entry name" value="PRK08195.1"/>
    <property type="match status" value="1"/>
</dbReference>
<dbReference type="PANTHER" id="PTHR10277:SF9">
    <property type="entry name" value="2-ISOPROPYLMALATE SYNTHASE 1, CHLOROPLASTIC-RELATED"/>
    <property type="match status" value="1"/>
</dbReference>
<dbReference type="PANTHER" id="PTHR10277">
    <property type="entry name" value="HOMOCITRATE SYNTHASE-RELATED"/>
    <property type="match status" value="1"/>
</dbReference>
<dbReference type="Pfam" id="PF07836">
    <property type="entry name" value="DmpG_comm"/>
    <property type="match status" value="1"/>
</dbReference>
<dbReference type="Pfam" id="PF00682">
    <property type="entry name" value="HMGL-like"/>
    <property type="match status" value="1"/>
</dbReference>
<dbReference type="SUPFAM" id="SSF51569">
    <property type="entry name" value="Aldolase"/>
    <property type="match status" value="1"/>
</dbReference>
<dbReference type="SUPFAM" id="SSF89000">
    <property type="entry name" value="post-HMGL domain-like"/>
    <property type="match status" value="1"/>
</dbReference>
<dbReference type="PROSITE" id="PS50991">
    <property type="entry name" value="PYR_CT"/>
    <property type="match status" value="1"/>
</dbReference>
<keyword id="KW-0058">Aromatic hydrocarbons catabolism</keyword>
<keyword id="KW-0456">Lyase</keyword>
<keyword id="KW-0464">Manganese</keyword>
<keyword id="KW-0479">Metal-binding</keyword>
<keyword id="KW-1185">Reference proteome</keyword>
<evidence type="ECO:0000255" key="1">
    <source>
        <dbReference type="HAMAP-Rule" id="MF_01656"/>
    </source>
</evidence>
<proteinExistence type="inferred from homology"/>
<reference key="1">
    <citation type="journal article" date="2007" name="J. Bacteriol.">
        <title>Whole-genome analysis of the methyl tert-butyl ether-degrading beta-proteobacterium Methylibium petroleiphilum PM1.</title>
        <authorList>
            <person name="Kane S.R."/>
            <person name="Chakicherla A.Y."/>
            <person name="Chain P.S.G."/>
            <person name="Schmidt R."/>
            <person name="Shin M.W."/>
            <person name="Legler T.C."/>
            <person name="Scow K.M."/>
            <person name="Larimer F.W."/>
            <person name="Lucas S.M."/>
            <person name="Richardson P.M."/>
            <person name="Hristova K.R."/>
        </authorList>
    </citation>
    <scope>NUCLEOTIDE SEQUENCE [LARGE SCALE GENOMIC DNA]</scope>
    <source>
        <strain>ATCC BAA-1232 / LMG 22953 / PM1</strain>
    </source>
</reference>
<protein>
    <recommendedName>
        <fullName evidence="1">4-hydroxy-2-oxovalerate aldolase 2</fullName>
        <shortName evidence="1">HOA 2</shortName>
        <ecNumber evidence="1">4.1.3.39</ecNumber>
    </recommendedName>
    <alternativeName>
        <fullName evidence="1">4-hydroxy-2-keto-pentanoic acid aldolase 2</fullName>
    </alternativeName>
    <alternativeName>
        <fullName evidence="1">4-hydroxy-2-oxopentanoate aldolase 2</fullName>
    </alternativeName>
</protein>
<sequence>MSATRSMEPDLRGRKVLLHDMCLRDGMHAKREQIPVEQMVKVAMALDAAGVPLIQVTHGAGLGGNSLQHGFALASNEAYLSAVAPKMKQAKVSVLLIPGLGTMRELQSAYNCGARSVTVATHCTEADTAPQHIAYARKLGMDTVGFLMMAHLNDPEGLAKQGKLMEDYGAQTVYVTDSAGYMLPADVRARVAALRAVLKPETEIGFHGHHNLGMGIANSIAAIEEGASRIDGSVAGLGAGAGNTPLEVFLAVCDRMGIETGVDLFKLMDVAEDVIVPMMDHLVRVDRESLTLGFAGVYSTFLLHAKRAAARFGVPAREILVELGRRKMIGGQEDMIEDTAMSMAKERGLLKDVSRKAA</sequence>
<feature type="chain" id="PRO_0000387841" description="4-hydroxy-2-oxovalerate aldolase 2">
    <location>
        <begin position="1"/>
        <end position="358"/>
    </location>
</feature>
<feature type="domain" description="Pyruvate carboxyltransferase" evidence="1">
    <location>
        <begin position="16"/>
        <end position="268"/>
    </location>
</feature>
<feature type="active site" description="Proton acceptor" evidence="1">
    <location>
        <position position="28"/>
    </location>
</feature>
<feature type="binding site" evidence="1">
    <location>
        <begin position="24"/>
        <end position="25"/>
    </location>
    <ligand>
        <name>substrate</name>
    </ligand>
</feature>
<feature type="binding site" evidence="1">
    <location>
        <position position="25"/>
    </location>
    <ligand>
        <name>Mn(2+)</name>
        <dbReference type="ChEBI" id="CHEBI:29035"/>
    </ligand>
</feature>
<feature type="binding site" evidence="1">
    <location>
        <position position="178"/>
    </location>
    <ligand>
        <name>substrate</name>
    </ligand>
</feature>
<feature type="binding site" evidence="1">
    <location>
        <position position="207"/>
    </location>
    <ligand>
        <name>Mn(2+)</name>
        <dbReference type="ChEBI" id="CHEBI:29035"/>
    </ligand>
</feature>
<feature type="binding site" evidence="1">
    <location>
        <position position="207"/>
    </location>
    <ligand>
        <name>substrate</name>
    </ligand>
</feature>
<feature type="binding site" evidence="1">
    <location>
        <position position="209"/>
    </location>
    <ligand>
        <name>Mn(2+)</name>
        <dbReference type="ChEBI" id="CHEBI:29035"/>
    </ligand>
</feature>
<feature type="binding site" evidence="1">
    <location>
        <position position="298"/>
    </location>
    <ligand>
        <name>substrate</name>
    </ligand>
</feature>
<feature type="site" description="Transition state stabilizer" evidence="1">
    <location>
        <position position="24"/>
    </location>
</feature>
<name>HOA2_METPP</name>
<accession>A2SL35</accession>
<gene>
    <name type="ordered locus">Mpe_A3321</name>
</gene>